<proteinExistence type="evidence at transcript level"/>
<reference key="1">
    <citation type="journal article" date="1996" name="Biochem. J.">
        <title>Specificity of G alpha q and G alpha 11 gene expression in platelets and erythrocytes. Expressions of cellular differentiation and species differences.</title>
        <authorList>
            <person name="Johnson G.J."/>
            <person name="Leis L.A."/>
            <person name="Dunlop P.C."/>
        </authorList>
    </citation>
    <scope>NUCLEOTIDE SEQUENCE [MRNA]</scope>
    <source>
        <tissue>Liver</tissue>
    </source>
</reference>
<keyword id="KW-1003">Cell membrane</keyword>
<keyword id="KW-0963">Cytoplasm</keyword>
<keyword id="KW-0342">GTP-binding</keyword>
<keyword id="KW-0378">Hydrolase</keyword>
<keyword id="KW-0449">Lipoprotein</keyword>
<keyword id="KW-0460">Magnesium</keyword>
<keyword id="KW-0472">Membrane</keyword>
<keyword id="KW-0479">Metal-binding</keyword>
<keyword id="KW-0547">Nucleotide-binding</keyword>
<keyword id="KW-0564">Palmitate</keyword>
<keyword id="KW-1185">Reference proteome</keyword>
<keyword id="KW-0807">Transducer</keyword>
<evidence type="ECO:0000250" key="1">
    <source>
        <dbReference type="UniProtKB" id="P21278"/>
    </source>
</evidence>
<evidence type="ECO:0000250" key="2">
    <source>
        <dbReference type="UniProtKB" id="P27600"/>
    </source>
</evidence>
<evidence type="ECO:0000250" key="3">
    <source>
        <dbReference type="UniProtKB" id="P29992"/>
    </source>
</evidence>
<evidence type="ECO:0000250" key="4">
    <source>
        <dbReference type="UniProtKB" id="P50148"/>
    </source>
</evidence>
<evidence type="ECO:0000255" key="5">
    <source>
        <dbReference type="PROSITE-ProRule" id="PRU01230"/>
    </source>
</evidence>
<evidence type="ECO:0000305" key="6"/>
<name>GNA11_CANLF</name>
<feature type="chain" id="PRO_0000203745" description="Guanine nucleotide-binding protein subunit alpha-11">
    <location>
        <begin position="1" status="less than"/>
        <end position="198" status="greater than"/>
    </location>
</feature>
<feature type="domain" description="G-alpha" evidence="5">
    <location>
        <begin position="1" status="less than"/>
        <end position="198" status="greater than"/>
    </location>
</feature>
<feature type="region of interest" description="G1 motif" evidence="5">
    <location>
        <begin position="1" status="less than"/>
        <end position="11"/>
    </location>
</feature>
<feature type="region of interest" description="G2 motif" evidence="5">
    <location>
        <begin position="135"/>
        <end position="143"/>
    </location>
</feature>
<feature type="region of interest" description="G3 motif" evidence="5">
    <location>
        <begin position="158"/>
        <end position="167"/>
    </location>
</feature>
<feature type="binding site" evidence="3">
    <location>
        <begin position="3"/>
        <end position="10"/>
    </location>
    <ligand>
        <name>GTP</name>
        <dbReference type="ChEBI" id="CHEBI:37565"/>
    </ligand>
</feature>
<feature type="binding site" evidence="2">
    <location>
        <position position="10"/>
    </location>
    <ligand>
        <name>Mg(2+)</name>
        <dbReference type="ChEBI" id="CHEBI:18420"/>
    </ligand>
</feature>
<feature type="binding site" evidence="2">
    <location>
        <begin position="137"/>
        <end position="140"/>
    </location>
    <ligand>
        <name>GTP</name>
        <dbReference type="ChEBI" id="CHEBI:37565"/>
    </ligand>
</feature>
<feature type="binding site" evidence="2">
    <location>
        <position position="143"/>
    </location>
    <ligand>
        <name>Mg(2+)</name>
        <dbReference type="ChEBI" id="CHEBI:18420"/>
    </ligand>
</feature>
<feature type="non-terminal residue">
    <location>
        <position position="1"/>
    </location>
</feature>
<feature type="non-terminal residue">
    <location>
        <position position="198"/>
    </location>
</feature>
<gene>
    <name type="primary">GNA11</name>
</gene>
<organism>
    <name type="scientific">Canis lupus familiaris</name>
    <name type="common">Dog</name>
    <name type="synonym">Canis familiaris</name>
    <dbReference type="NCBI Taxonomy" id="9615"/>
    <lineage>
        <taxon>Eukaryota</taxon>
        <taxon>Metazoa</taxon>
        <taxon>Chordata</taxon>
        <taxon>Craniata</taxon>
        <taxon>Vertebrata</taxon>
        <taxon>Euteleostomi</taxon>
        <taxon>Mammalia</taxon>
        <taxon>Eutheria</taxon>
        <taxon>Laurasiatheria</taxon>
        <taxon>Carnivora</taxon>
        <taxon>Caniformia</taxon>
        <taxon>Canidae</taxon>
        <taxon>Canis</taxon>
    </lineage>
</organism>
<dbReference type="EMBL" id="L43134">
    <property type="protein sequence ID" value="AAB39497.1"/>
    <property type="molecule type" value="mRNA"/>
</dbReference>
<dbReference type="PIR" id="S71964">
    <property type="entry name" value="S71964"/>
</dbReference>
<dbReference type="SMR" id="P52206"/>
<dbReference type="CORUM" id="P52206"/>
<dbReference type="SwissPalm" id="P52206"/>
<dbReference type="InParanoid" id="P52206"/>
<dbReference type="OrthoDB" id="5817230at2759"/>
<dbReference type="Proteomes" id="UP000002254">
    <property type="component" value="Unplaced"/>
</dbReference>
<dbReference type="Proteomes" id="UP000694429">
    <property type="component" value="Unplaced"/>
</dbReference>
<dbReference type="Proteomes" id="UP000694542">
    <property type="component" value="Unplaced"/>
</dbReference>
<dbReference type="Proteomes" id="UP000805418">
    <property type="component" value="Unplaced"/>
</dbReference>
<dbReference type="GO" id="GO:0005737">
    <property type="term" value="C:cytoplasm"/>
    <property type="evidence" value="ECO:0000250"/>
    <property type="project" value="UniProtKB"/>
</dbReference>
<dbReference type="GO" id="GO:0005834">
    <property type="term" value="C:heterotrimeric G-protein complex"/>
    <property type="evidence" value="ECO:0000318"/>
    <property type="project" value="GO_Central"/>
</dbReference>
<dbReference type="GO" id="GO:0001664">
    <property type="term" value="F:G protein-coupled receptor binding"/>
    <property type="evidence" value="ECO:0000318"/>
    <property type="project" value="GO_Central"/>
</dbReference>
<dbReference type="GO" id="GO:0031683">
    <property type="term" value="F:G-protein beta/gamma-subunit complex binding"/>
    <property type="evidence" value="ECO:0000318"/>
    <property type="project" value="GO_Central"/>
</dbReference>
<dbReference type="GO" id="GO:0005525">
    <property type="term" value="F:GTP binding"/>
    <property type="evidence" value="ECO:0007669"/>
    <property type="project" value="UniProtKB-KW"/>
</dbReference>
<dbReference type="GO" id="GO:0003924">
    <property type="term" value="F:GTPase activity"/>
    <property type="evidence" value="ECO:0000318"/>
    <property type="project" value="GO_Central"/>
</dbReference>
<dbReference type="GO" id="GO:0046872">
    <property type="term" value="F:metal ion binding"/>
    <property type="evidence" value="ECO:0007669"/>
    <property type="project" value="UniProtKB-KW"/>
</dbReference>
<dbReference type="GO" id="GO:0001508">
    <property type="term" value="P:action potential"/>
    <property type="evidence" value="ECO:0000318"/>
    <property type="project" value="GO_Central"/>
</dbReference>
<dbReference type="GO" id="GO:0007188">
    <property type="term" value="P:adenylate cyclase-modulating G protein-coupled receptor signaling pathway"/>
    <property type="evidence" value="ECO:0000318"/>
    <property type="project" value="GO_Central"/>
</dbReference>
<dbReference type="GO" id="GO:0060158">
    <property type="term" value="P:phospholipase C-activating dopamine receptor signaling pathway"/>
    <property type="evidence" value="ECO:0000318"/>
    <property type="project" value="GO_Central"/>
</dbReference>
<dbReference type="CDD" id="cd00066">
    <property type="entry name" value="G-alpha"/>
    <property type="match status" value="1"/>
</dbReference>
<dbReference type="FunFam" id="1.10.400.10:FF:000002">
    <property type="entry name" value="guanine nucleotide-binding protein G(Q) subunit alpha"/>
    <property type="match status" value="1"/>
</dbReference>
<dbReference type="FunFam" id="3.40.50.300:FF:000692">
    <property type="entry name" value="Guanine nucleotide-binding protein subunit alpha"/>
    <property type="match status" value="1"/>
</dbReference>
<dbReference type="Gene3D" id="1.10.400.10">
    <property type="entry name" value="GI Alpha 1, domain 2-like"/>
    <property type="match status" value="1"/>
</dbReference>
<dbReference type="Gene3D" id="3.40.50.300">
    <property type="entry name" value="P-loop containing nucleotide triphosphate hydrolases"/>
    <property type="match status" value="1"/>
</dbReference>
<dbReference type="InterPro" id="IPR001019">
    <property type="entry name" value="Gprotein_alpha_su"/>
</dbReference>
<dbReference type="InterPro" id="IPR011025">
    <property type="entry name" value="GproteinA_insert"/>
</dbReference>
<dbReference type="InterPro" id="IPR027417">
    <property type="entry name" value="P-loop_NTPase"/>
</dbReference>
<dbReference type="PANTHER" id="PTHR10218">
    <property type="entry name" value="GTP-BINDING PROTEIN ALPHA SUBUNIT"/>
    <property type="match status" value="1"/>
</dbReference>
<dbReference type="PANTHER" id="PTHR10218:SF328">
    <property type="entry name" value="GUANINE NUCLEOTIDE-BINDING PROTEIN SUBUNIT ALPHA-11"/>
    <property type="match status" value="1"/>
</dbReference>
<dbReference type="Pfam" id="PF00503">
    <property type="entry name" value="G-alpha"/>
    <property type="match status" value="1"/>
</dbReference>
<dbReference type="PRINTS" id="PR00318">
    <property type="entry name" value="GPROTEINA"/>
</dbReference>
<dbReference type="SMART" id="SM00275">
    <property type="entry name" value="G_alpha"/>
    <property type="match status" value="1"/>
</dbReference>
<dbReference type="SUPFAM" id="SSF52540">
    <property type="entry name" value="P-loop containing nucleoside triphosphate hydrolases"/>
    <property type="match status" value="1"/>
</dbReference>
<dbReference type="SUPFAM" id="SSF47895">
    <property type="entry name" value="Transducin (alpha subunit), insertion domain"/>
    <property type="match status" value="1"/>
</dbReference>
<dbReference type="PROSITE" id="PS51882">
    <property type="entry name" value="G_ALPHA"/>
    <property type="match status" value="1"/>
</dbReference>
<accession>P52206</accession>
<protein>
    <recommendedName>
        <fullName>Guanine nucleotide-binding protein subunit alpha-11</fullName>
        <shortName>G alpha-11</shortName>
        <shortName>G-protein subunit alpha-11</shortName>
    </recommendedName>
</protein>
<comment type="function">
    <text evidence="1 3">Guanine nucleotide-binding proteins (G proteins) function as transducers downstream of G protein-coupled receptors (GPCRs) in numerous signaling cascades. The alpha chain contains the guanine nucleotide binding site and alternates between an active, GTP-bound state and an inactive, GDP-bound state. Signaling by an activated GPCR promotes GDP release and GTP binding. The alpha subunit has a low GTPase activity that converts bound GTP to GDP, thereby terminating the signal. Both GDP release and GTP hydrolysis are modulated by numerous regulatory proteins. Signaling is mediated via phospholipase C-beta-dependent inositol lipid hydrolysis for signal propagation: activates phospholipase C-beta: following GPCR activation, GNA11 activates PLC-beta (PLCB1, PLCB2, PLCB3 or PLCB4), leading to production of diacylglycerol (DAG) and inositol 1,4,5-trisphosphate (IP3). Transduces FFAR4 signaling in response to long-chain fatty acids (LCFAs) (By similarity). Together with GNAQ, required for heart development (By similarity). In the respiratory epithelium, transmits OXGR1-dependent signals that lead to downstream intracellular Ca(2+) release and mucocilliary clearance of airborne pathogens.</text>
</comment>
<comment type="catalytic activity">
    <reaction evidence="4">
        <text>GTP + H2O = GDP + phosphate + H(+)</text>
        <dbReference type="Rhea" id="RHEA:19669"/>
        <dbReference type="ChEBI" id="CHEBI:15377"/>
        <dbReference type="ChEBI" id="CHEBI:15378"/>
        <dbReference type="ChEBI" id="CHEBI:37565"/>
        <dbReference type="ChEBI" id="CHEBI:43474"/>
        <dbReference type="ChEBI" id="CHEBI:58189"/>
    </reaction>
    <physiologicalReaction direction="left-to-right" evidence="4">
        <dbReference type="Rhea" id="RHEA:19670"/>
    </physiologicalReaction>
</comment>
<comment type="subunit">
    <text evidence="3">G proteins are composed of 3 units; alpha, beta and gamma. The alpha chain contains the guanine nucleotide binding site. Interacts with RGS22. Interacts with NTSR1.</text>
</comment>
<comment type="subcellular location">
    <subcellularLocation>
        <location evidence="3">Cell membrane</location>
        <topology evidence="3">Lipid-anchor</topology>
    </subcellularLocation>
    <subcellularLocation>
        <location evidence="3">Cytoplasm</location>
    </subcellularLocation>
</comment>
<comment type="similarity">
    <text evidence="6">Belongs to the G-alpha family. G(q) subfamily.</text>
</comment>
<sequence>LLGTGESGKSTFIKQMRIIHGAGYSEEDKRGFTKLVYQNIFTAMQAMIRAMETLKILYKYEQNKANALLIREVDVEKVTTFEHRYVHAIKTLWDDPGIQECYDRRREYQLSDSAKYYLADVDRIATSGYLPTQQDVLRVRVPTTGIIEYPFDLENIIFRMVDVGGQRSERRKWIHCFENVTSIMFLVALSEYDHVLVE</sequence>